<reference key="1">
    <citation type="journal article" date="1995" name="Science">
        <title>Whole-genome random sequencing and assembly of Haemophilus influenzae Rd.</title>
        <authorList>
            <person name="Fleischmann R.D."/>
            <person name="Adams M.D."/>
            <person name="White O."/>
            <person name="Clayton R.A."/>
            <person name="Kirkness E.F."/>
            <person name="Kerlavage A.R."/>
            <person name="Bult C.J."/>
            <person name="Tomb J.-F."/>
            <person name="Dougherty B.A."/>
            <person name="Merrick J.M."/>
            <person name="McKenney K."/>
            <person name="Sutton G.G."/>
            <person name="FitzHugh W."/>
            <person name="Fields C.A."/>
            <person name="Gocayne J.D."/>
            <person name="Scott J.D."/>
            <person name="Shirley R."/>
            <person name="Liu L.-I."/>
            <person name="Glodek A."/>
            <person name="Kelley J.M."/>
            <person name="Weidman J.F."/>
            <person name="Phillips C.A."/>
            <person name="Spriggs T."/>
            <person name="Hedblom E."/>
            <person name="Cotton M.D."/>
            <person name="Utterback T.R."/>
            <person name="Hanna M.C."/>
            <person name="Nguyen D.T."/>
            <person name="Saudek D.M."/>
            <person name="Brandon R.C."/>
            <person name="Fine L.D."/>
            <person name="Fritchman J.L."/>
            <person name="Fuhrmann J.L."/>
            <person name="Geoghagen N.S.M."/>
            <person name="Gnehm C.L."/>
            <person name="McDonald L.A."/>
            <person name="Small K.V."/>
            <person name="Fraser C.M."/>
            <person name="Smith H.O."/>
            <person name="Venter J.C."/>
        </authorList>
    </citation>
    <scope>NUCLEOTIDE SEQUENCE [LARGE SCALE GENOMIC DNA]</scope>
    <source>
        <strain>ATCC 51907 / DSM 11121 / KW20 / Rd</strain>
    </source>
</reference>
<reference key="2">
    <citation type="journal article" date="1998" name="Electrophoresis">
        <title>Reference map of the low molecular mass proteins of Haemophilus influenzae.</title>
        <authorList>
            <person name="Fountoulakis M."/>
            <person name="Juranville J.-F."/>
            <person name="Roeder D."/>
            <person name="Evers S."/>
            <person name="Berndt P."/>
            <person name="Langen H."/>
        </authorList>
    </citation>
    <scope>IDENTIFICATION BY MASS SPECTROMETRY</scope>
    <source>
        <strain>ATCC 51907 / DSM 11121 / KW20 / Rd</strain>
    </source>
</reference>
<reference key="3">
    <citation type="journal article" date="2001" name="Structure">
        <title>A structural genomics approach to the study of quorum sensing: crystal structures of three LuxS orthologs.</title>
        <authorList>
            <person name="Lewis H.A."/>
            <person name="Furlong E.B."/>
            <person name="Laubert B."/>
            <person name="Eroshkina G.A."/>
            <person name="Batiyenko Y."/>
            <person name="Adams J.M."/>
            <person name="Bergseid M.G."/>
            <person name="Marsh C.D."/>
            <person name="Peat T.S."/>
            <person name="Sanderson W.E."/>
            <person name="Sauder J.M."/>
            <person name="Buchanan S.G."/>
        </authorList>
    </citation>
    <scope>X-RAY CRYSTALLOGRAPHY (2.1 ANGSTROMS)</scope>
</reference>
<reference key="4">
    <citation type="submission" date="2001-07" db="PDB data bank">
        <title>Crystal structure of autoinducer-2 production protein (luxS) from Haemophilus influenzae -- a case of twinned crystal.</title>
        <authorList>
            <person name="Chen C.C.H."/>
            <person name="Parsons J.F."/>
            <person name="Lim K."/>
            <person name="Lehmann C."/>
            <person name="Tempczyk A."/>
            <person name="Eisenstein E."/>
            <person name="Herzberg O."/>
        </authorList>
    </citation>
    <scope>X-RAY CRYSTALLOGRAPHY (2.4 ANGSTROMS)</scope>
    <source>
        <strain>ATCC 51907 / DSM 11121 / KW20 / Rd</strain>
    </source>
</reference>
<evidence type="ECO:0000250" key="1"/>
<evidence type="ECO:0000305" key="2"/>
<evidence type="ECO:0007829" key="3">
    <source>
        <dbReference type="PDB" id="1J6W"/>
    </source>
</evidence>
<proteinExistence type="evidence at protein level"/>
<organism>
    <name type="scientific">Haemophilus influenzae (strain ATCC 51907 / DSM 11121 / KW20 / Rd)</name>
    <dbReference type="NCBI Taxonomy" id="71421"/>
    <lineage>
        <taxon>Bacteria</taxon>
        <taxon>Pseudomonadati</taxon>
        <taxon>Pseudomonadota</taxon>
        <taxon>Gammaproteobacteria</taxon>
        <taxon>Pasteurellales</taxon>
        <taxon>Pasteurellaceae</taxon>
        <taxon>Haemophilus</taxon>
    </lineage>
</organism>
<accession>P44007</accession>
<keyword id="KW-0002">3D-structure</keyword>
<keyword id="KW-0071">Autoinducer synthesis</keyword>
<keyword id="KW-0408">Iron</keyword>
<keyword id="KW-0456">Lyase</keyword>
<keyword id="KW-0479">Metal-binding</keyword>
<keyword id="KW-0673">Quorum sensing</keyword>
<keyword id="KW-1185">Reference proteome</keyword>
<dbReference type="EC" id="4.4.1.21"/>
<dbReference type="EMBL" id="L42023">
    <property type="protein sequence ID" value="AAC22149.1"/>
    <property type="molecule type" value="Genomic_DNA"/>
</dbReference>
<dbReference type="PIR" id="G64008">
    <property type="entry name" value="G64008"/>
</dbReference>
<dbReference type="RefSeq" id="NP_438651.1">
    <property type="nucleotide sequence ID" value="NC_000907.1"/>
</dbReference>
<dbReference type="PDB" id="1J6W">
    <property type="method" value="X-ray"/>
    <property type="resolution" value="2.10 A"/>
    <property type="chains" value="A/B=2-167"/>
</dbReference>
<dbReference type="PDB" id="1JOE">
    <property type="method" value="X-ray"/>
    <property type="resolution" value="2.40 A"/>
    <property type="chains" value="A/B/C/D=1-167"/>
</dbReference>
<dbReference type="PDBsum" id="1J6W"/>
<dbReference type="PDBsum" id="1JOE"/>
<dbReference type="SMR" id="P44007"/>
<dbReference type="STRING" id="71421.HI_0491"/>
<dbReference type="EnsemblBacteria" id="AAC22149">
    <property type="protein sequence ID" value="AAC22149"/>
    <property type="gene ID" value="HI_0491"/>
</dbReference>
<dbReference type="KEGG" id="hin:HI_0491"/>
<dbReference type="PATRIC" id="fig|71421.8.peg.510"/>
<dbReference type="eggNOG" id="COG1854">
    <property type="taxonomic scope" value="Bacteria"/>
</dbReference>
<dbReference type="HOGENOM" id="CLU_107531_2_0_6"/>
<dbReference type="OrthoDB" id="9788129at2"/>
<dbReference type="PhylomeDB" id="P44007"/>
<dbReference type="BioCyc" id="HINF71421:G1GJ1-506-MONOMER"/>
<dbReference type="BRENDA" id="4.4.1.21">
    <property type="organism ID" value="2529"/>
</dbReference>
<dbReference type="EvolutionaryTrace" id="P44007"/>
<dbReference type="Proteomes" id="UP000000579">
    <property type="component" value="Chromosome"/>
</dbReference>
<dbReference type="GO" id="GO:0005829">
    <property type="term" value="C:cytosol"/>
    <property type="evidence" value="ECO:0000318"/>
    <property type="project" value="GO_Central"/>
</dbReference>
<dbReference type="GO" id="GO:0005506">
    <property type="term" value="F:iron ion binding"/>
    <property type="evidence" value="ECO:0007669"/>
    <property type="project" value="InterPro"/>
</dbReference>
<dbReference type="GO" id="GO:0043768">
    <property type="term" value="F:S-ribosylhomocysteine lyase activity"/>
    <property type="evidence" value="ECO:0000318"/>
    <property type="project" value="GO_Central"/>
</dbReference>
<dbReference type="GO" id="GO:0019284">
    <property type="term" value="P:L-methionine salvage from S-adenosylmethionine"/>
    <property type="evidence" value="ECO:0000318"/>
    <property type="project" value="GO_Central"/>
</dbReference>
<dbReference type="GO" id="GO:0009372">
    <property type="term" value="P:quorum sensing"/>
    <property type="evidence" value="ECO:0007669"/>
    <property type="project" value="UniProtKB-UniRule"/>
</dbReference>
<dbReference type="Gene3D" id="3.30.1360.80">
    <property type="entry name" value="S-ribosylhomocysteinase (LuxS)"/>
    <property type="match status" value="1"/>
</dbReference>
<dbReference type="HAMAP" id="MF_00091">
    <property type="entry name" value="LuxS"/>
    <property type="match status" value="1"/>
</dbReference>
<dbReference type="InterPro" id="IPR037005">
    <property type="entry name" value="LuxS_sf"/>
</dbReference>
<dbReference type="InterPro" id="IPR011249">
    <property type="entry name" value="Metalloenz_LuxS/M16"/>
</dbReference>
<dbReference type="InterPro" id="IPR003815">
    <property type="entry name" value="S-ribosylhomocysteinase"/>
</dbReference>
<dbReference type="NCBIfam" id="NF002602">
    <property type="entry name" value="PRK02260.1-2"/>
    <property type="match status" value="1"/>
</dbReference>
<dbReference type="PANTHER" id="PTHR35799">
    <property type="entry name" value="S-RIBOSYLHOMOCYSTEINE LYASE"/>
    <property type="match status" value="1"/>
</dbReference>
<dbReference type="PANTHER" id="PTHR35799:SF1">
    <property type="entry name" value="S-RIBOSYLHOMOCYSTEINE LYASE"/>
    <property type="match status" value="1"/>
</dbReference>
<dbReference type="Pfam" id="PF02664">
    <property type="entry name" value="LuxS"/>
    <property type="match status" value="1"/>
</dbReference>
<dbReference type="PIRSF" id="PIRSF006160">
    <property type="entry name" value="AI2"/>
    <property type="match status" value="1"/>
</dbReference>
<dbReference type="PRINTS" id="PR01487">
    <property type="entry name" value="LUXSPROTEIN"/>
</dbReference>
<dbReference type="SUPFAM" id="SSF63411">
    <property type="entry name" value="LuxS/MPP-like metallohydrolase"/>
    <property type="match status" value="1"/>
</dbReference>
<sequence>MPLLDSFKVDHTKMNAPAVRIAKTMLTPKGDNITVFDLRFCIPNKEILSPKGIHTLEHLFAGFMRDHLNGDSIEIIDISPMGCRTGFYMSLIGTPNEQKVSEAWLASMQDVLGVQDQASIPELNIYQCGSYTEHSLEDAHEIAKNVIARGIGVNKNEDLSLDNSLLK</sequence>
<comment type="function">
    <text>Involved in the synthesis of autoinducer 2 (AI-2) which is secreted by bacteria and is used to communicate both the cell density and the metabolic potential of the environment. The regulation of gene expression in response to changes in cell density is called quorum sensing. Catalyzes the transformation of S-ribosylhomocysteine (RHC) to homocysteine (HC) and 4,5-dihydroxy-2,3-pentadione (DPD).</text>
</comment>
<comment type="catalytic activity">
    <reaction>
        <text>S-(5-deoxy-D-ribos-5-yl)-L-homocysteine = (S)-4,5-dihydroxypentane-2,3-dione + L-homocysteine</text>
        <dbReference type="Rhea" id="RHEA:17753"/>
        <dbReference type="ChEBI" id="CHEBI:29484"/>
        <dbReference type="ChEBI" id="CHEBI:58195"/>
        <dbReference type="ChEBI" id="CHEBI:58199"/>
        <dbReference type="EC" id="4.4.1.21"/>
    </reaction>
</comment>
<comment type="cofactor">
    <cofactor>
        <name>Fe cation</name>
        <dbReference type="ChEBI" id="CHEBI:24875"/>
    </cofactor>
    <text>Binds 1 Fe cation per subunit.</text>
</comment>
<comment type="subunit">
    <text>Homodimer.</text>
</comment>
<comment type="similarity">
    <text evidence="2">Belongs to the LuxS family.</text>
</comment>
<name>LUXS_HAEIN</name>
<protein>
    <recommendedName>
        <fullName>S-ribosylhomocysteine lyase</fullName>
        <ecNumber>4.4.1.21</ecNumber>
    </recommendedName>
    <alternativeName>
        <fullName>AI-2 synthesis protein</fullName>
    </alternativeName>
    <alternativeName>
        <fullName>Autoinducer-2 production protein LuxS</fullName>
    </alternativeName>
</protein>
<gene>
    <name type="primary">luxS</name>
    <name type="ordered locus">HI_0491</name>
</gene>
<feature type="initiator methionine" description="Removed" evidence="1">
    <location>
        <position position="1"/>
    </location>
</feature>
<feature type="chain" id="PRO_0000172227" description="S-ribosylhomocysteine lyase">
    <location>
        <begin position="2"/>
        <end position="167"/>
    </location>
</feature>
<feature type="binding site">
    <location>
        <position position="54"/>
    </location>
    <ligand>
        <name>Fe cation</name>
        <dbReference type="ChEBI" id="CHEBI:24875"/>
    </ligand>
</feature>
<feature type="binding site">
    <location>
        <position position="58"/>
    </location>
    <ligand>
        <name>Fe cation</name>
        <dbReference type="ChEBI" id="CHEBI:24875"/>
    </ligand>
</feature>
<feature type="binding site">
    <location>
        <position position="128"/>
    </location>
    <ligand>
        <name>Fe cation</name>
        <dbReference type="ChEBI" id="CHEBI:24875"/>
    </ligand>
</feature>
<feature type="helix" evidence="3">
    <location>
        <begin position="5"/>
        <end position="8"/>
    </location>
</feature>
<feature type="helix" evidence="3">
    <location>
        <begin position="11"/>
        <end position="13"/>
    </location>
</feature>
<feature type="strand" evidence="3">
    <location>
        <begin position="16"/>
        <end position="26"/>
    </location>
</feature>
<feature type="strand" evidence="3">
    <location>
        <begin position="32"/>
        <end position="39"/>
    </location>
</feature>
<feature type="turn" evidence="3">
    <location>
        <begin position="43"/>
        <end position="45"/>
    </location>
</feature>
<feature type="helix" evidence="3">
    <location>
        <begin position="50"/>
        <end position="68"/>
    </location>
</feature>
<feature type="strand" evidence="3">
    <location>
        <begin position="73"/>
        <end position="80"/>
    </location>
</feature>
<feature type="strand" evidence="3">
    <location>
        <begin position="84"/>
        <end position="93"/>
    </location>
</feature>
<feature type="helix" evidence="3">
    <location>
        <begin position="97"/>
        <end position="112"/>
    </location>
</feature>
<feature type="helix" evidence="3">
    <location>
        <begin position="117"/>
        <end position="119"/>
    </location>
</feature>
<feature type="turn" evidence="3">
    <location>
        <begin position="125"/>
        <end position="127"/>
    </location>
</feature>
<feature type="turn" evidence="3">
    <location>
        <begin position="129"/>
        <end position="132"/>
    </location>
</feature>
<feature type="helix" evidence="3">
    <location>
        <begin position="136"/>
        <end position="149"/>
    </location>
</feature>
<feature type="strand" evidence="3">
    <location>
        <begin position="152"/>
        <end position="154"/>
    </location>
</feature>
<feature type="helix" evidence="3">
    <location>
        <begin position="156"/>
        <end position="159"/>
    </location>
</feature>